<organism>
    <name type="scientific">Mycobacterium leprae (strain TN)</name>
    <dbReference type="NCBI Taxonomy" id="272631"/>
    <lineage>
        <taxon>Bacteria</taxon>
        <taxon>Bacillati</taxon>
        <taxon>Actinomycetota</taxon>
        <taxon>Actinomycetes</taxon>
        <taxon>Mycobacteriales</taxon>
        <taxon>Mycobacteriaceae</taxon>
        <taxon>Mycobacterium</taxon>
    </lineage>
</organism>
<protein>
    <recommendedName>
        <fullName evidence="1">Orotate phosphoribosyltransferase</fullName>
        <shortName evidence="1">OPRT</shortName>
        <shortName evidence="1">OPRTase</shortName>
        <ecNumber evidence="1">2.4.2.10</ecNumber>
    </recommendedName>
</protein>
<proteinExistence type="inferred from homology"/>
<dbReference type="EC" id="2.4.2.10" evidence="1"/>
<dbReference type="EMBL" id="AL583925">
    <property type="protein sequence ID" value="CAC32004.1"/>
    <property type="molecule type" value="Genomic_DNA"/>
</dbReference>
<dbReference type="PIR" id="D87220">
    <property type="entry name" value="D87220"/>
</dbReference>
<dbReference type="RefSeq" id="NP_302606.1">
    <property type="nucleotide sequence ID" value="NC_002677.1"/>
</dbReference>
<dbReference type="RefSeq" id="WP_010908925.1">
    <property type="nucleotide sequence ID" value="NC_002677.1"/>
</dbReference>
<dbReference type="SMR" id="Q9CB28"/>
<dbReference type="STRING" id="272631.gene:17576351"/>
<dbReference type="KEGG" id="mle:ML2487"/>
<dbReference type="PATRIC" id="fig|272631.5.peg.4779"/>
<dbReference type="Leproma" id="ML2487"/>
<dbReference type="eggNOG" id="COG0461">
    <property type="taxonomic scope" value="Bacteria"/>
</dbReference>
<dbReference type="HOGENOM" id="CLU_074878_2_1_11"/>
<dbReference type="OrthoDB" id="1493031at2"/>
<dbReference type="UniPathway" id="UPA00070">
    <property type="reaction ID" value="UER00119"/>
</dbReference>
<dbReference type="Proteomes" id="UP000000806">
    <property type="component" value="Chromosome"/>
</dbReference>
<dbReference type="GO" id="GO:0000287">
    <property type="term" value="F:magnesium ion binding"/>
    <property type="evidence" value="ECO:0007669"/>
    <property type="project" value="UniProtKB-UniRule"/>
</dbReference>
<dbReference type="GO" id="GO:0004588">
    <property type="term" value="F:orotate phosphoribosyltransferase activity"/>
    <property type="evidence" value="ECO:0007669"/>
    <property type="project" value="UniProtKB-UniRule"/>
</dbReference>
<dbReference type="GO" id="GO:0044205">
    <property type="term" value="P:'de novo' UMP biosynthetic process"/>
    <property type="evidence" value="ECO:0007669"/>
    <property type="project" value="UniProtKB-UniRule"/>
</dbReference>
<dbReference type="GO" id="GO:0019856">
    <property type="term" value="P:pyrimidine nucleobase biosynthetic process"/>
    <property type="evidence" value="ECO:0007669"/>
    <property type="project" value="TreeGrafter"/>
</dbReference>
<dbReference type="CDD" id="cd06223">
    <property type="entry name" value="PRTases_typeI"/>
    <property type="match status" value="1"/>
</dbReference>
<dbReference type="FunFam" id="3.40.50.2020:FF:000029">
    <property type="entry name" value="Orotate phosphoribosyltransferase"/>
    <property type="match status" value="1"/>
</dbReference>
<dbReference type="Gene3D" id="3.40.50.2020">
    <property type="match status" value="1"/>
</dbReference>
<dbReference type="HAMAP" id="MF_01208">
    <property type="entry name" value="PyrE"/>
    <property type="match status" value="1"/>
</dbReference>
<dbReference type="InterPro" id="IPR023031">
    <property type="entry name" value="OPRT"/>
</dbReference>
<dbReference type="InterPro" id="IPR004467">
    <property type="entry name" value="Or_phspho_trans_dom"/>
</dbReference>
<dbReference type="InterPro" id="IPR000836">
    <property type="entry name" value="PRibTrfase_dom"/>
</dbReference>
<dbReference type="InterPro" id="IPR029057">
    <property type="entry name" value="PRTase-like"/>
</dbReference>
<dbReference type="NCBIfam" id="TIGR00336">
    <property type="entry name" value="pyrE"/>
    <property type="match status" value="1"/>
</dbReference>
<dbReference type="PANTHER" id="PTHR19278">
    <property type="entry name" value="OROTATE PHOSPHORIBOSYLTRANSFERASE"/>
    <property type="match status" value="1"/>
</dbReference>
<dbReference type="PANTHER" id="PTHR19278:SF9">
    <property type="entry name" value="URIDINE 5'-MONOPHOSPHATE SYNTHASE"/>
    <property type="match status" value="1"/>
</dbReference>
<dbReference type="Pfam" id="PF00156">
    <property type="entry name" value="Pribosyltran"/>
    <property type="match status" value="1"/>
</dbReference>
<dbReference type="SUPFAM" id="SSF53271">
    <property type="entry name" value="PRTase-like"/>
    <property type="match status" value="1"/>
</dbReference>
<reference key="1">
    <citation type="journal article" date="2001" name="Nature">
        <title>Massive gene decay in the leprosy bacillus.</title>
        <authorList>
            <person name="Cole S.T."/>
            <person name="Eiglmeier K."/>
            <person name="Parkhill J."/>
            <person name="James K.D."/>
            <person name="Thomson N.R."/>
            <person name="Wheeler P.R."/>
            <person name="Honore N."/>
            <person name="Garnier T."/>
            <person name="Churcher C.M."/>
            <person name="Harris D.E."/>
            <person name="Mungall K.L."/>
            <person name="Basham D."/>
            <person name="Brown D."/>
            <person name="Chillingworth T."/>
            <person name="Connor R."/>
            <person name="Davies R.M."/>
            <person name="Devlin K."/>
            <person name="Duthoy S."/>
            <person name="Feltwell T."/>
            <person name="Fraser A."/>
            <person name="Hamlin N."/>
            <person name="Holroyd S."/>
            <person name="Hornsby T."/>
            <person name="Jagels K."/>
            <person name="Lacroix C."/>
            <person name="Maclean J."/>
            <person name="Moule S."/>
            <person name="Murphy L.D."/>
            <person name="Oliver K."/>
            <person name="Quail M.A."/>
            <person name="Rajandream M.A."/>
            <person name="Rutherford K.M."/>
            <person name="Rutter S."/>
            <person name="Seeger K."/>
            <person name="Simon S."/>
            <person name="Simmonds M."/>
            <person name="Skelton J."/>
            <person name="Squares R."/>
            <person name="Squares S."/>
            <person name="Stevens K."/>
            <person name="Taylor K."/>
            <person name="Whitehead S."/>
            <person name="Woodward J.R."/>
            <person name="Barrell B.G."/>
        </authorList>
    </citation>
    <scope>NUCLEOTIDE SEQUENCE [LARGE SCALE GENOMIC DNA]</scope>
    <source>
        <strain>TN</strain>
    </source>
</reference>
<keyword id="KW-0328">Glycosyltransferase</keyword>
<keyword id="KW-0460">Magnesium</keyword>
<keyword id="KW-0665">Pyrimidine biosynthesis</keyword>
<keyword id="KW-1185">Reference proteome</keyword>
<keyword id="KW-0808">Transferase</keyword>
<gene>
    <name evidence="1" type="primary">pyrE</name>
    <name type="ordered locus">ML2487</name>
</gene>
<sequence length="179" mass="18879">MAELDRKELADLVRRLSVVQGCVTLSSGKQADHYVDLRRATLHHRASALIGRLMRELTKDWNYTVVGGLTLGADPVAIAIIHSPGRPIDAFVVRKYAKTHGLQRLIEGSEVSGQRVLVVEDTSTTGASALTAVRAVQDAGGDVVGVATVVDRGTGAAEAIKAEGLLYRSVLGLADLGLG</sequence>
<feature type="chain" id="PRO_0000110710" description="Orotate phosphoribosyltransferase">
    <location>
        <begin position="1"/>
        <end position="179"/>
    </location>
</feature>
<feature type="binding site" evidence="1">
    <location>
        <position position="94"/>
    </location>
    <ligand>
        <name>5-phospho-alpha-D-ribose 1-diphosphate</name>
        <dbReference type="ChEBI" id="CHEBI:58017"/>
        <note>ligand shared between dimeric partners</note>
    </ligand>
</feature>
<feature type="binding site" description="in other chain" evidence="1">
    <location>
        <position position="95"/>
    </location>
    <ligand>
        <name>5-phospho-alpha-D-ribose 1-diphosphate</name>
        <dbReference type="ChEBI" id="CHEBI:58017"/>
        <note>ligand shared between dimeric partners</note>
    </ligand>
</feature>
<feature type="binding site" evidence="1">
    <location>
        <position position="98"/>
    </location>
    <ligand>
        <name>5-phospho-alpha-D-ribose 1-diphosphate</name>
        <dbReference type="ChEBI" id="CHEBI:58017"/>
        <note>ligand shared between dimeric partners</note>
    </ligand>
</feature>
<feature type="binding site" evidence="1">
    <location>
        <position position="100"/>
    </location>
    <ligand>
        <name>5-phospho-alpha-D-ribose 1-diphosphate</name>
        <dbReference type="ChEBI" id="CHEBI:58017"/>
        <note>ligand shared between dimeric partners</note>
    </ligand>
</feature>
<feature type="binding site" description="in other chain" evidence="1">
    <location>
        <begin position="120"/>
        <end position="128"/>
    </location>
    <ligand>
        <name>5-phospho-alpha-D-ribose 1-diphosphate</name>
        <dbReference type="ChEBI" id="CHEBI:58017"/>
        <note>ligand shared between dimeric partners</note>
    </ligand>
</feature>
<feature type="binding site" evidence="1">
    <location>
        <position position="124"/>
    </location>
    <ligand>
        <name>orotate</name>
        <dbReference type="ChEBI" id="CHEBI:30839"/>
    </ligand>
</feature>
<feature type="binding site" evidence="1">
    <location>
        <position position="152"/>
    </location>
    <ligand>
        <name>orotate</name>
        <dbReference type="ChEBI" id="CHEBI:30839"/>
    </ligand>
</feature>
<comment type="function">
    <text evidence="1">Catalyzes the transfer of a ribosyl phosphate group from 5-phosphoribose 1-diphosphate to orotate, leading to the formation of orotidine monophosphate (OMP).</text>
</comment>
<comment type="catalytic activity">
    <reaction evidence="1">
        <text>orotidine 5'-phosphate + diphosphate = orotate + 5-phospho-alpha-D-ribose 1-diphosphate</text>
        <dbReference type="Rhea" id="RHEA:10380"/>
        <dbReference type="ChEBI" id="CHEBI:30839"/>
        <dbReference type="ChEBI" id="CHEBI:33019"/>
        <dbReference type="ChEBI" id="CHEBI:57538"/>
        <dbReference type="ChEBI" id="CHEBI:58017"/>
        <dbReference type="EC" id="2.4.2.10"/>
    </reaction>
</comment>
<comment type="cofactor">
    <cofactor evidence="1">
        <name>Mg(2+)</name>
        <dbReference type="ChEBI" id="CHEBI:18420"/>
    </cofactor>
</comment>
<comment type="pathway">
    <text evidence="1">Pyrimidine metabolism; UMP biosynthesis via de novo pathway; UMP from orotate: step 1/2.</text>
</comment>
<comment type="subunit">
    <text evidence="1">Homodimer.</text>
</comment>
<comment type="similarity">
    <text evidence="1">Belongs to the purine/pyrimidine phosphoribosyltransferase family. PyrE subfamily.</text>
</comment>
<evidence type="ECO:0000255" key="1">
    <source>
        <dbReference type="HAMAP-Rule" id="MF_01208"/>
    </source>
</evidence>
<name>PYRE_MYCLE</name>
<accession>Q9CB28</accession>